<reference key="1">
    <citation type="journal article" date="1993" name="Endocrinology">
        <title>Gastric inhibitory polypeptide receptor, a member of the secretin-vasoactive intestinal peptide receptor family, is widely distributed in peripheral organs and the brain.</title>
        <authorList>
            <person name="Usdin T.B."/>
            <person name="Mezey E."/>
            <person name="Button D.C."/>
            <person name="Brownstein M.J."/>
            <person name="Bonner T.I."/>
        </authorList>
    </citation>
    <scope>NUCLEOTIDE SEQUENCE [MRNA]</scope>
    <scope>FUNCTION</scope>
    <scope>TISSUE SPECIFICITY</scope>
    <source>
        <strain>Sprague-Dawley</strain>
        <tissue>Brain</tissue>
    </source>
</reference>
<sequence>MPLRLLLLLLWLWGLSLQRAETDSEGQTTGELYQRWERYGWECQNTLEATEPPSGLACNGSFDMYACWNYTAANTTARVSCPWYLPWYRQVAAGFVFRQCGSDGQWGSWRDHTQCENPEKNGAFQDQKLILERLQVVYTVGYSLSLATLLLALLILSLFRRLHCTRNYIHMNLFTSFMLRAGAILTRDQLLPPLGPYTGNQTPTLWNQALAACRTAQILTQYCVGANYTWLLVEGVYLHHLLVVVRRSEKGHFRCYLLLGWGAPALFVIPWVIVRYLYENTQCWERNEVKAIWWIIRTPILITILINFLIFIRILGILVSKLRTRQMRCPDYRLRLARSTLTLMPLLGVHEVVFAPVTEEQAEGSLRFAKLAFEIFLSSFQGFLVSVLYCFINKEVQSEIRRLRLSLQEQCPRPHLGQAPRAVPLSSAPQEAAIRNALPSGMLHVPGDEVLESYC</sequence>
<name>GIPR_RAT</name>
<dbReference type="EMBL" id="L19660">
    <property type="protein sequence ID" value="AAC37637.1"/>
    <property type="molecule type" value="mRNA"/>
</dbReference>
<dbReference type="PIR" id="I53273">
    <property type="entry name" value="I53273"/>
</dbReference>
<dbReference type="RefSeq" id="NP_036846.1">
    <property type="nucleotide sequence ID" value="NM_012714.2"/>
</dbReference>
<dbReference type="RefSeq" id="XP_017444289.1">
    <property type="nucleotide sequence ID" value="XM_017588800.1"/>
</dbReference>
<dbReference type="RefSeq" id="XP_063137216.1">
    <property type="nucleotide sequence ID" value="XM_063281146.1"/>
</dbReference>
<dbReference type="SMR" id="P43219"/>
<dbReference type="FunCoup" id="P43219">
    <property type="interactions" value="41"/>
</dbReference>
<dbReference type="STRING" id="10116.ENSRNOP00000021456"/>
<dbReference type="BindingDB" id="P43219"/>
<dbReference type="ChEMBL" id="CHEMBL5001"/>
<dbReference type="GuidetoPHARMACOLOGY" id="248"/>
<dbReference type="GlyCosmos" id="P43219">
    <property type="glycosylation" value="3 sites, No reported glycans"/>
</dbReference>
<dbReference type="GlyGen" id="P43219">
    <property type="glycosylation" value="3 sites"/>
</dbReference>
<dbReference type="PhosphoSitePlus" id="P43219"/>
<dbReference type="PaxDb" id="10116-ENSRNOP00000021456"/>
<dbReference type="Ensembl" id="ENSRNOT00000021456.3">
    <property type="protein sequence ID" value="ENSRNOP00000021456.1"/>
    <property type="gene ID" value="ENSRNOG00000015860.5"/>
</dbReference>
<dbReference type="GeneID" id="25024"/>
<dbReference type="KEGG" id="rno:25024"/>
<dbReference type="UCSC" id="RGD:2689">
    <property type="organism name" value="rat"/>
</dbReference>
<dbReference type="AGR" id="RGD:2689"/>
<dbReference type="CTD" id="2696"/>
<dbReference type="RGD" id="2689">
    <property type="gene designation" value="Gipr"/>
</dbReference>
<dbReference type="eggNOG" id="KOG4564">
    <property type="taxonomic scope" value="Eukaryota"/>
</dbReference>
<dbReference type="GeneTree" id="ENSGT00940000161988"/>
<dbReference type="HOGENOM" id="CLU_002753_4_0_1"/>
<dbReference type="InParanoid" id="P43219"/>
<dbReference type="OMA" id="LNCPPWR"/>
<dbReference type="OrthoDB" id="5967113at2759"/>
<dbReference type="PhylomeDB" id="P43219"/>
<dbReference type="TreeFam" id="TF315710"/>
<dbReference type="Reactome" id="R-RNO-420092">
    <property type="pathway name" value="Glucagon-type ligand receptors"/>
</dbReference>
<dbReference type="PRO" id="PR:P43219"/>
<dbReference type="Proteomes" id="UP000002494">
    <property type="component" value="Chromosome 1"/>
</dbReference>
<dbReference type="Bgee" id="ENSRNOG00000015860">
    <property type="expression patterns" value="Expressed in frontal cortex and 9 other cell types or tissues"/>
</dbReference>
<dbReference type="GO" id="GO:0005886">
    <property type="term" value="C:plasma membrane"/>
    <property type="evidence" value="ECO:0000266"/>
    <property type="project" value="RGD"/>
</dbReference>
<dbReference type="GO" id="GO:0008528">
    <property type="term" value="F:G protein-coupled peptide receptor activity"/>
    <property type="evidence" value="ECO:0000318"/>
    <property type="project" value="GO_Central"/>
</dbReference>
<dbReference type="GO" id="GO:0016519">
    <property type="term" value="F:gastric inhibitory peptide receptor activity"/>
    <property type="evidence" value="ECO:0000314"/>
    <property type="project" value="RGD"/>
</dbReference>
<dbReference type="GO" id="GO:0120022">
    <property type="term" value="F:glucagon family peptide binding"/>
    <property type="evidence" value="ECO:0000266"/>
    <property type="project" value="RGD"/>
</dbReference>
<dbReference type="GO" id="GO:0017046">
    <property type="term" value="F:peptide hormone binding"/>
    <property type="evidence" value="ECO:0000353"/>
    <property type="project" value="RGD"/>
</dbReference>
<dbReference type="GO" id="GO:0007189">
    <property type="term" value="P:adenylate cyclase-activating G protein-coupled receptor signaling pathway"/>
    <property type="evidence" value="ECO:0000266"/>
    <property type="project" value="RGD"/>
</dbReference>
<dbReference type="GO" id="GO:0007188">
    <property type="term" value="P:adenylate cyclase-modulating G protein-coupled receptor signaling pathway"/>
    <property type="evidence" value="ECO:0000318"/>
    <property type="project" value="GO_Central"/>
</dbReference>
<dbReference type="GO" id="GO:0007166">
    <property type="term" value="P:cell surface receptor signaling pathway"/>
    <property type="evidence" value="ECO:0007669"/>
    <property type="project" value="InterPro"/>
</dbReference>
<dbReference type="GO" id="GO:0002029">
    <property type="term" value="P:desensitization of G protein-coupled receptor signaling pathway"/>
    <property type="evidence" value="ECO:0000314"/>
    <property type="project" value="RGD"/>
</dbReference>
<dbReference type="GO" id="GO:0031018">
    <property type="term" value="P:endocrine pancreas development"/>
    <property type="evidence" value="ECO:0000266"/>
    <property type="project" value="RGD"/>
</dbReference>
<dbReference type="GO" id="GO:0038192">
    <property type="term" value="P:gastric inhibitory peptide signaling pathway"/>
    <property type="evidence" value="ECO:0000315"/>
    <property type="project" value="RGD"/>
</dbReference>
<dbReference type="GO" id="GO:0007204">
    <property type="term" value="P:positive regulation of cytosolic calcium ion concentration"/>
    <property type="evidence" value="ECO:0000314"/>
    <property type="project" value="RGD"/>
</dbReference>
<dbReference type="GO" id="GO:0032024">
    <property type="term" value="P:positive regulation of insulin secretion"/>
    <property type="evidence" value="ECO:0000315"/>
    <property type="project" value="RGD"/>
</dbReference>
<dbReference type="GO" id="GO:0048678">
    <property type="term" value="P:response to axon injury"/>
    <property type="evidence" value="ECO:0000270"/>
    <property type="project" value="RGD"/>
</dbReference>
<dbReference type="GO" id="GO:0051592">
    <property type="term" value="P:response to calcium ion"/>
    <property type="evidence" value="ECO:0000315"/>
    <property type="project" value="RGD"/>
</dbReference>
<dbReference type="GO" id="GO:0070542">
    <property type="term" value="P:response to fatty acid"/>
    <property type="evidence" value="ECO:0000270"/>
    <property type="project" value="RGD"/>
</dbReference>
<dbReference type="GO" id="GO:0009749">
    <property type="term" value="P:response to glucose"/>
    <property type="evidence" value="ECO:0000270"/>
    <property type="project" value="RGD"/>
</dbReference>
<dbReference type="CDD" id="cd15929">
    <property type="entry name" value="7tmB1_GlucagonR-like"/>
    <property type="match status" value="1"/>
</dbReference>
<dbReference type="FunFam" id="1.20.1070.10:FF:000229">
    <property type="entry name" value="Gastric inhibitory polypeptide receptor"/>
    <property type="match status" value="1"/>
</dbReference>
<dbReference type="FunFam" id="4.10.1240.10:FF:000019">
    <property type="entry name" value="Gastric inhibitory polypeptide receptor"/>
    <property type="match status" value="1"/>
</dbReference>
<dbReference type="Gene3D" id="4.10.1240.10">
    <property type="entry name" value="GPCR, family 2, extracellular hormone receptor domain"/>
    <property type="match status" value="1"/>
</dbReference>
<dbReference type="Gene3D" id="1.20.1070.10">
    <property type="entry name" value="Rhodopsin 7-helix transmembrane proteins"/>
    <property type="match status" value="1"/>
</dbReference>
<dbReference type="InterPro" id="IPR050332">
    <property type="entry name" value="GPCR_2"/>
</dbReference>
<dbReference type="InterPro" id="IPR017981">
    <property type="entry name" value="GPCR_2-like_7TM"/>
</dbReference>
<dbReference type="InterPro" id="IPR036445">
    <property type="entry name" value="GPCR_2_extracell_dom_sf"/>
</dbReference>
<dbReference type="InterPro" id="IPR001879">
    <property type="entry name" value="GPCR_2_extracellular_dom"/>
</dbReference>
<dbReference type="InterPro" id="IPR001749">
    <property type="entry name" value="GPCR_2_GIP_rcpt"/>
</dbReference>
<dbReference type="InterPro" id="IPR000832">
    <property type="entry name" value="GPCR_2_secretin-like"/>
</dbReference>
<dbReference type="InterPro" id="IPR017983">
    <property type="entry name" value="GPCR_2_secretin-like_CS"/>
</dbReference>
<dbReference type="PANTHER" id="PTHR45620:SF5">
    <property type="entry name" value="GASTRIC INHIBITORY POLYPEPTIDE RECEPTOR"/>
    <property type="match status" value="1"/>
</dbReference>
<dbReference type="PANTHER" id="PTHR45620">
    <property type="entry name" value="PDF RECEPTOR-LIKE PROTEIN-RELATED"/>
    <property type="match status" value="1"/>
</dbReference>
<dbReference type="Pfam" id="PF00002">
    <property type="entry name" value="7tm_2"/>
    <property type="match status" value="1"/>
</dbReference>
<dbReference type="Pfam" id="PF02793">
    <property type="entry name" value="HRM"/>
    <property type="match status" value="1"/>
</dbReference>
<dbReference type="PRINTS" id="PR01129">
    <property type="entry name" value="GIPRECEPTOR"/>
</dbReference>
<dbReference type="PRINTS" id="PR00249">
    <property type="entry name" value="GPCRSECRETIN"/>
</dbReference>
<dbReference type="SMART" id="SM00008">
    <property type="entry name" value="HormR"/>
    <property type="match status" value="1"/>
</dbReference>
<dbReference type="SUPFAM" id="SSF81321">
    <property type="entry name" value="Family A G protein-coupled receptor-like"/>
    <property type="match status" value="1"/>
</dbReference>
<dbReference type="SUPFAM" id="SSF111418">
    <property type="entry name" value="Hormone receptor domain"/>
    <property type="match status" value="1"/>
</dbReference>
<dbReference type="PROSITE" id="PS00649">
    <property type="entry name" value="G_PROTEIN_RECEP_F2_1"/>
    <property type="match status" value="1"/>
</dbReference>
<dbReference type="PROSITE" id="PS00650">
    <property type="entry name" value="G_PROTEIN_RECEP_F2_2"/>
    <property type="match status" value="1"/>
</dbReference>
<dbReference type="PROSITE" id="PS50227">
    <property type="entry name" value="G_PROTEIN_RECEP_F2_3"/>
    <property type="match status" value="1"/>
</dbReference>
<dbReference type="PROSITE" id="PS50261">
    <property type="entry name" value="G_PROTEIN_RECEP_F2_4"/>
    <property type="match status" value="1"/>
</dbReference>
<protein>
    <recommendedName>
        <fullName>Gastric inhibitory polypeptide receptor</fullName>
        <shortName>GIP-R</shortName>
    </recommendedName>
    <alternativeName>
        <fullName>Glucose-dependent insulinotropic polypeptide receptor</fullName>
    </alternativeName>
</protein>
<comment type="function">
    <text evidence="3">This is a receptor for GIP. The activity of this receptor is mediated by G proteins which activate adenylyl cyclase.</text>
</comment>
<comment type="subunit">
    <text evidence="1">May form homodimers and heterodimers with GLP1R.</text>
</comment>
<comment type="subcellular location">
    <subcellularLocation>
        <location evidence="4">Cell membrane</location>
        <topology evidence="2">Multi-pass membrane protein</topology>
    </subcellularLocation>
</comment>
<comment type="tissue specificity">
    <text evidence="3">Present in the pancreas as well as the gut, adipose tissue, heart, pituitary, and inner layers of the adrenal cortex, whereas it is not found in kidney, spleen, or liver. It is also expressed in several brain regions, including the cerebral cortex, hippocampus, and olfactory bulb.</text>
</comment>
<comment type="PTM">
    <text evidence="1">N-glycosylation is required for cell surface expression and lengthens receptor half-life by preventing degradation in the ER.</text>
</comment>
<comment type="similarity">
    <text evidence="4">Belongs to the G-protein coupled receptor 2 family.</text>
</comment>
<feature type="signal peptide" evidence="2">
    <location>
        <begin position="1"/>
        <end position="18"/>
    </location>
</feature>
<feature type="chain" id="PRO_0000012827" description="Gastric inhibitory polypeptide receptor">
    <location>
        <begin position="19"/>
        <end position="455"/>
    </location>
</feature>
<feature type="topological domain" description="Extracellular" evidence="2">
    <location>
        <begin position="19"/>
        <end position="135"/>
    </location>
</feature>
<feature type="transmembrane region" description="Helical; Name=1" evidence="2">
    <location>
        <begin position="136"/>
        <end position="158"/>
    </location>
</feature>
<feature type="topological domain" description="Cytoplasmic" evidence="2">
    <location>
        <begin position="159"/>
        <end position="166"/>
    </location>
</feature>
<feature type="transmembrane region" description="Helical; Name=2" evidence="2">
    <location>
        <begin position="167"/>
        <end position="186"/>
    </location>
</feature>
<feature type="topological domain" description="Extracellular" evidence="2">
    <location>
        <begin position="187"/>
        <end position="214"/>
    </location>
</feature>
<feature type="transmembrane region" description="Helical; Name=3" evidence="2">
    <location>
        <begin position="215"/>
        <end position="239"/>
    </location>
</feature>
<feature type="topological domain" description="Cytoplasmic" evidence="2">
    <location>
        <begin position="240"/>
        <end position="251"/>
    </location>
</feature>
<feature type="transmembrane region" description="Helical; Name=4" evidence="2">
    <location>
        <begin position="252"/>
        <end position="275"/>
    </location>
</feature>
<feature type="topological domain" description="Extracellular" evidence="2">
    <location>
        <begin position="276"/>
        <end position="290"/>
    </location>
</feature>
<feature type="transmembrane region" description="Helical; Name=5" evidence="2">
    <location>
        <begin position="291"/>
        <end position="316"/>
    </location>
</feature>
<feature type="topological domain" description="Cytoplasmic" evidence="2">
    <location>
        <begin position="317"/>
        <end position="338"/>
    </location>
</feature>
<feature type="transmembrane region" description="Helical; Name=6" evidence="2">
    <location>
        <begin position="339"/>
        <end position="359"/>
    </location>
</feature>
<feature type="topological domain" description="Extracellular" evidence="2">
    <location>
        <begin position="360"/>
        <end position="374"/>
    </location>
</feature>
<feature type="transmembrane region" description="Helical; Name=7" evidence="2">
    <location>
        <begin position="375"/>
        <end position="395"/>
    </location>
</feature>
<feature type="topological domain" description="Cytoplasmic" evidence="2">
    <location>
        <begin position="396"/>
        <end position="455"/>
    </location>
</feature>
<feature type="glycosylation site" description="N-linked (GlcNAc...) asparagine" evidence="2">
    <location>
        <position position="59"/>
    </location>
</feature>
<feature type="glycosylation site" description="N-linked (GlcNAc...) asparagine" evidence="2">
    <location>
        <position position="69"/>
    </location>
</feature>
<feature type="glycosylation site" description="N-linked (GlcNAc...) asparagine" evidence="2">
    <location>
        <position position="74"/>
    </location>
</feature>
<feature type="disulfide bond" evidence="1">
    <location>
        <begin position="43"/>
        <end position="67"/>
    </location>
</feature>
<feature type="disulfide bond" evidence="1">
    <location>
        <begin position="58"/>
        <end position="100"/>
    </location>
</feature>
<feature type="disulfide bond" evidence="1">
    <location>
        <begin position="81"/>
        <end position="115"/>
    </location>
</feature>
<accession>P43219</accession>
<evidence type="ECO:0000250" key="1">
    <source>
        <dbReference type="UniProtKB" id="P48546"/>
    </source>
</evidence>
<evidence type="ECO:0000255" key="2"/>
<evidence type="ECO:0000269" key="3">
    <source>
    </source>
</evidence>
<evidence type="ECO:0000305" key="4"/>
<proteinExistence type="evidence at transcript level"/>
<gene>
    <name type="primary">Gipr</name>
</gene>
<organism>
    <name type="scientific">Rattus norvegicus</name>
    <name type="common">Rat</name>
    <dbReference type="NCBI Taxonomy" id="10116"/>
    <lineage>
        <taxon>Eukaryota</taxon>
        <taxon>Metazoa</taxon>
        <taxon>Chordata</taxon>
        <taxon>Craniata</taxon>
        <taxon>Vertebrata</taxon>
        <taxon>Euteleostomi</taxon>
        <taxon>Mammalia</taxon>
        <taxon>Eutheria</taxon>
        <taxon>Euarchontoglires</taxon>
        <taxon>Glires</taxon>
        <taxon>Rodentia</taxon>
        <taxon>Myomorpha</taxon>
        <taxon>Muroidea</taxon>
        <taxon>Muridae</taxon>
        <taxon>Murinae</taxon>
        <taxon>Rattus</taxon>
    </lineage>
</organism>
<keyword id="KW-1003">Cell membrane</keyword>
<keyword id="KW-1015">Disulfide bond</keyword>
<keyword id="KW-0297">G-protein coupled receptor</keyword>
<keyword id="KW-0325">Glycoprotein</keyword>
<keyword id="KW-0472">Membrane</keyword>
<keyword id="KW-0675">Receptor</keyword>
<keyword id="KW-1185">Reference proteome</keyword>
<keyword id="KW-0732">Signal</keyword>
<keyword id="KW-0807">Transducer</keyword>
<keyword id="KW-0812">Transmembrane</keyword>
<keyword id="KW-1133">Transmembrane helix</keyword>